<name>IF2_DESRM</name>
<proteinExistence type="inferred from homology"/>
<reference key="1">
    <citation type="submission" date="2007-03" db="EMBL/GenBank/DDBJ databases">
        <title>Complete sequence of Desulfotomaculum reducens MI-1.</title>
        <authorList>
            <consortium name="US DOE Joint Genome Institute"/>
            <person name="Copeland A."/>
            <person name="Lucas S."/>
            <person name="Lapidus A."/>
            <person name="Barry K."/>
            <person name="Detter J.C."/>
            <person name="Glavina del Rio T."/>
            <person name="Hammon N."/>
            <person name="Israni S."/>
            <person name="Dalin E."/>
            <person name="Tice H."/>
            <person name="Pitluck S."/>
            <person name="Sims D."/>
            <person name="Brettin T."/>
            <person name="Bruce D."/>
            <person name="Han C."/>
            <person name="Tapia R."/>
            <person name="Schmutz J."/>
            <person name="Larimer F."/>
            <person name="Land M."/>
            <person name="Hauser L."/>
            <person name="Kyrpides N."/>
            <person name="Kim E."/>
            <person name="Tebo B.M."/>
            <person name="Richardson P."/>
        </authorList>
    </citation>
    <scope>NUCLEOTIDE SEQUENCE [LARGE SCALE GENOMIC DNA]</scope>
    <source>
        <strain>ATCC BAA-1160 / DSM 100696 / MI-1</strain>
    </source>
</reference>
<comment type="function">
    <text evidence="2">One of the essential components for the initiation of protein synthesis. Protects formylmethionyl-tRNA from spontaneous hydrolysis and promotes its binding to the 30S ribosomal subunits. Also involved in the hydrolysis of GTP during the formation of the 70S ribosomal complex.</text>
</comment>
<comment type="subcellular location">
    <subcellularLocation>
        <location evidence="2">Cytoplasm</location>
    </subcellularLocation>
</comment>
<comment type="similarity">
    <text evidence="2">Belongs to the TRAFAC class translation factor GTPase superfamily. Classic translation factor GTPase family. IF-2 subfamily.</text>
</comment>
<evidence type="ECO:0000250" key="1"/>
<evidence type="ECO:0000255" key="2">
    <source>
        <dbReference type="HAMAP-Rule" id="MF_00100"/>
    </source>
</evidence>
<evidence type="ECO:0000256" key="3">
    <source>
        <dbReference type="SAM" id="MobiDB-lite"/>
    </source>
</evidence>
<sequence length="985" mass="107321">MTKKRVHELAKELNIENKELINKLMQIGISVKSHMSALENDAVEKVYHQYGKKQEKSSDSANKQIQREHGRGQGMEDKKEKDQLFRPDNAKGPGLVDRVPNRPPDRRYEDKAKVAQKPAQELRGSKTTTNSENEQTAPRQGSAQQSGQGRPQANRPQGSQGRPYGGRPQGGQSRPYGDRPQGGQGRPYGDRPQGGQGRPYGDRPQGGQGRPYGDRPQGGQGRPYGDRPQGGQGRPYGDRPQGGQGRPYGDRPQGGQSRPYGDRPQGGQGRPYGDRPQGGQSRPYGDRPQGGQGRPYGDRPQGGQGRHYGDRPQGGQGRPQGAGRPGANRGAGPSIPKPPEQVAQPKPTKAPDKTKGDRRKNYEKDGKWADGQIEKNKLFKGRNNKNKKRQHQQSAPPPILDKKPVQIAEVITVQELAEKLKKTAAEVIKKLMGLGVLATINQEVDFETATLIAGEYGIETELKVAVDKEALVMAEPEEDEDKLVLRPPVVTIMGHVDHGKTSLLDAIRETNVTAGEAGGITQHIGAYQVERNGKKITFVDTPGHAAFTSMRARGAQITDIAILVVAADDGVMPQTIEAINHAKAANVPIIVAINKMDKPDANPDKVKQELTQHELVVEDWGGDVIAVPVSAKNRTGLDNLLEMILLVAEVHELKANPDRMARGTVVEAELDKGRGPVATVLVQNGTLNVGDTIVVGQVSGRVRAMIDDKGRRVKKAPPSTPVEILGLSDVPEAGDILVAVEDEKLARDVAEKRKIRKREEGLKSSTKISLDDLFKHIQEGQIKELPIIVKADVQGSIEALAQALEKLTTEEVKVNLIHTGVGAVNETDIMLATASNAIVIGFNVRPDNNARKLADAEKVDINLYRVIYEVIDDVKKAMSGLLDPEFKEVVLGHVEVRKTFKASKIGTIAGGYVTEGKIVRDASVRVIRDGIVVFEGKLDSLKRFKDDAKEVAQGYECGLTIDRFNDVQEGDIIEAFTMEAIKREI</sequence>
<keyword id="KW-0963">Cytoplasm</keyword>
<keyword id="KW-0342">GTP-binding</keyword>
<keyword id="KW-0396">Initiation factor</keyword>
<keyword id="KW-0547">Nucleotide-binding</keyword>
<keyword id="KW-0648">Protein biosynthesis</keyword>
<keyword id="KW-1185">Reference proteome</keyword>
<protein>
    <recommendedName>
        <fullName evidence="2">Translation initiation factor IF-2</fullName>
    </recommendedName>
</protein>
<accession>A4J5X2</accession>
<feature type="chain" id="PRO_1000071288" description="Translation initiation factor IF-2">
    <location>
        <begin position="1"/>
        <end position="985"/>
    </location>
</feature>
<feature type="domain" description="tr-type G">
    <location>
        <begin position="485"/>
        <end position="654"/>
    </location>
</feature>
<feature type="region of interest" description="Disordered" evidence="3">
    <location>
        <begin position="49"/>
        <end position="401"/>
    </location>
</feature>
<feature type="region of interest" description="G1" evidence="1">
    <location>
        <begin position="494"/>
        <end position="501"/>
    </location>
</feature>
<feature type="region of interest" description="G2" evidence="1">
    <location>
        <begin position="519"/>
        <end position="523"/>
    </location>
</feature>
<feature type="region of interest" description="G3" evidence="1">
    <location>
        <begin position="540"/>
        <end position="543"/>
    </location>
</feature>
<feature type="region of interest" description="G4" evidence="1">
    <location>
        <begin position="594"/>
        <end position="597"/>
    </location>
</feature>
<feature type="region of interest" description="G5" evidence="1">
    <location>
        <begin position="630"/>
        <end position="632"/>
    </location>
</feature>
<feature type="compositionally biased region" description="Basic and acidic residues" evidence="3">
    <location>
        <begin position="49"/>
        <end position="58"/>
    </location>
</feature>
<feature type="compositionally biased region" description="Basic and acidic residues" evidence="3">
    <location>
        <begin position="65"/>
        <end position="89"/>
    </location>
</feature>
<feature type="compositionally biased region" description="Basic and acidic residues" evidence="3">
    <location>
        <begin position="99"/>
        <end position="113"/>
    </location>
</feature>
<feature type="compositionally biased region" description="Polar residues" evidence="3">
    <location>
        <begin position="125"/>
        <end position="136"/>
    </location>
</feature>
<feature type="compositionally biased region" description="Low complexity" evidence="3">
    <location>
        <begin position="137"/>
        <end position="162"/>
    </location>
</feature>
<feature type="compositionally biased region" description="Gly residues" evidence="3">
    <location>
        <begin position="180"/>
        <end position="246"/>
    </location>
</feature>
<feature type="compositionally biased region" description="Gly residues" evidence="3">
    <location>
        <begin position="288"/>
        <end position="324"/>
    </location>
</feature>
<feature type="compositionally biased region" description="Basic and acidic residues" evidence="3">
    <location>
        <begin position="349"/>
        <end position="377"/>
    </location>
</feature>
<feature type="compositionally biased region" description="Basic residues" evidence="3">
    <location>
        <begin position="378"/>
        <end position="391"/>
    </location>
</feature>
<feature type="binding site" evidence="2">
    <location>
        <begin position="494"/>
        <end position="501"/>
    </location>
    <ligand>
        <name>GTP</name>
        <dbReference type="ChEBI" id="CHEBI:37565"/>
    </ligand>
</feature>
<feature type="binding site" evidence="2">
    <location>
        <begin position="540"/>
        <end position="544"/>
    </location>
    <ligand>
        <name>GTP</name>
        <dbReference type="ChEBI" id="CHEBI:37565"/>
    </ligand>
</feature>
<feature type="binding site" evidence="2">
    <location>
        <begin position="594"/>
        <end position="597"/>
    </location>
    <ligand>
        <name>GTP</name>
        <dbReference type="ChEBI" id="CHEBI:37565"/>
    </ligand>
</feature>
<organism>
    <name type="scientific">Desulforamulus reducens (strain ATCC BAA-1160 / DSM 100696 / MI-1)</name>
    <name type="common">Desulfotomaculum reducens</name>
    <dbReference type="NCBI Taxonomy" id="349161"/>
    <lineage>
        <taxon>Bacteria</taxon>
        <taxon>Bacillati</taxon>
        <taxon>Bacillota</taxon>
        <taxon>Clostridia</taxon>
        <taxon>Eubacteriales</taxon>
        <taxon>Peptococcaceae</taxon>
        <taxon>Desulforamulus</taxon>
    </lineage>
</organism>
<gene>
    <name evidence="2" type="primary">infB</name>
    <name type="ordered locus">Dred_1957</name>
</gene>
<dbReference type="EMBL" id="CP000612">
    <property type="protein sequence ID" value="ABO50475.1"/>
    <property type="molecule type" value="Genomic_DNA"/>
</dbReference>
<dbReference type="RefSeq" id="WP_011878285.1">
    <property type="nucleotide sequence ID" value="NC_009253.1"/>
</dbReference>
<dbReference type="SMR" id="A4J5X2"/>
<dbReference type="STRING" id="349161.Dred_1957"/>
<dbReference type="KEGG" id="drm:Dred_1957"/>
<dbReference type="eggNOG" id="COG0532">
    <property type="taxonomic scope" value="Bacteria"/>
</dbReference>
<dbReference type="HOGENOM" id="CLU_006301_5_1_9"/>
<dbReference type="OrthoDB" id="9811804at2"/>
<dbReference type="Proteomes" id="UP000001556">
    <property type="component" value="Chromosome"/>
</dbReference>
<dbReference type="GO" id="GO:0005829">
    <property type="term" value="C:cytosol"/>
    <property type="evidence" value="ECO:0007669"/>
    <property type="project" value="TreeGrafter"/>
</dbReference>
<dbReference type="GO" id="GO:0005525">
    <property type="term" value="F:GTP binding"/>
    <property type="evidence" value="ECO:0007669"/>
    <property type="project" value="UniProtKB-KW"/>
</dbReference>
<dbReference type="GO" id="GO:0003924">
    <property type="term" value="F:GTPase activity"/>
    <property type="evidence" value="ECO:0007669"/>
    <property type="project" value="UniProtKB-UniRule"/>
</dbReference>
<dbReference type="GO" id="GO:0003743">
    <property type="term" value="F:translation initiation factor activity"/>
    <property type="evidence" value="ECO:0007669"/>
    <property type="project" value="UniProtKB-UniRule"/>
</dbReference>
<dbReference type="CDD" id="cd01887">
    <property type="entry name" value="IF2_eIF5B"/>
    <property type="match status" value="1"/>
</dbReference>
<dbReference type="CDD" id="cd03702">
    <property type="entry name" value="IF2_mtIF2_II"/>
    <property type="match status" value="1"/>
</dbReference>
<dbReference type="CDD" id="cd03692">
    <property type="entry name" value="mtIF2_IVc"/>
    <property type="match status" value="1"/>
</dbReference>
<dbReference type="FunFam" id="2.40.30.10:FF:000007">
    <property type="entry name" value="Translation initiation factor IF-2"/>
    <property type="match status" value="1"/>
</dbReference>
<dbReference type="FunFam" id="2.40.30.10:FF:000008">
    <property type="entry name" value="Translation initiation factor IF-2"/>
    <property type="match status" value="1"/>
</dbReference>
<dbReference type="FunFam" id="3.40.50.10050:FF:000001">
    <property type="entry name" value="Translation initiation factor IF-2"/>
    <property type="match status" value="1"/>
</dbReference>
<dbReference type="FunFam" id="3.40.50.300:FF:000019">
    <property type="entry name" value="Translation initiation factor IF-2"/>
    <property type="match status" value="1"/>
</dbReference>
<dbReference type="Gene3D" id="1.10.10.2480">
    <property type="match status" value="1"/>
</dbReference>
<dbReference type="Gene3D" id="3.40.50.300">
    <property type="entry name" value="P-loop containing nucleotide triphosphate hydrolases"/>
    <property type="match status" value="1"/>
</dbReference>
<dbReference type="Gene3D" id="2.40.30.10">
    <property type="entry name" value="Translation factors"/>
    <property type="match status" value="2"/>
</dbReference>
<dbReference type="Gene3D" id="3.40.50.10050">
    <property type="entry name" value="Translation initiation factor IF- 2, domain 3"/>
    <property type="match status" value="1"/>
</dbReference>
<dbReference type="HAMAP" id="MF_00100_B">
    <property type="entry name" value="IF_2_B"/>
    <property type="match status" value="1"/>
</dbReference>
<dbReference type="InterPro" id="IPR053905">
    <property type="entry name" value="EF-G-like_DII"/>
</dbReference>
<dbReference type="InterPro" id="IPR044145">
    <property type="entry name" value="IF2_II"/>
</dbReference>
<dbReference type="InterPro" id="IPR006847">
    <property type="entry name" value="IF2_N"/>
</dbReference>
<dbReference type="InterPro" id="IPR027417">
    <property type="entry name" value="P-loop_NTPase"/>
</dbReference>
<dbReference type="InterPro" id="IPR005225">
    <property type="entry name" value="Small_GTP-bd"/>
</dbReference>
<dbReference type="InterPro" id="IPR000795">
    <property type="entry name" value="T_Tr_GTP-bd_dom"/>
</dbReference>
<dbReference type="InterPro" id="IPR000178">
    <property type="entry name" value="TF_IF2_bacterial-like"/>
</dbReference>
<dbReference type="InterPro" id="IPR015760">
    <property type="entry name" value="TIF_IF2"/>
</dbReference>
<dbReference type="InterPro" id="IPR023115">
    <property type="entry name" value="TIF_IF2_dom3"/>
</dbReference>
<dbReference type="InterPro" id="IPR036925">
    <property type="entry name" value="TIF_IF2_dom3_sf"/>
</dbReference>
<dbReference type="InterPro" id="IPR009000">
    <property type="entry name" value="Transl_B-barrel_sf"/>
</dbReference>
<dbReference type="NCBIfam" id="TIGR00487">
    <property type="entry name" value="IF-2"/>
    <property type="match status" value="1"/>
</dbReference>
<dbReference type="NCBIfam" id="TIGR00231">
    <property type="entry name" value="small_GTP"/>
    <property type="match status" value="1"/>
</dbReference>
<dbReference type="PANTHER" id="PTHR43381:SF5">
    <property type="entry name" value="TR-TYPE G DOMAIN-CONTAINING PROTEIN"/>
    <property type="match status" value="1"/>
</dbReference>
<dbReference type="PANTHER" id="PTHR43381">
    <property type="entry name" value="TRANSLATION INITIATION FACTOR IF-2-RELATED"/>
    <property type="match status" value="1"/>
</dbReference>
<dbReference type="Pfam" id="PF22042">
    <property type="entry name" value="EF-G_D2"/>
    <property type="match status" value="1"/>
</dbReference>
<dbReference type="Pfam" id="PF00009">
    <property type="entry name" value="GTP_EFTU"/>
    <property type="match status" value="1"/>
</dbReference>
<dbReference type="Pfam" id="PF11987">
    <property type="entry name" value="IF-2"/>
    <property type="match status" value="1"/>
</dbReference>
<dbReference type="Pfam" id="PF04760">
    <property type="entry name" value="IF2_N"/>
    <property type="match status" value="2"/>
</dbReference>
<dbReference type="SUPFAM" id="SSF52156">
    <property type="entry name" value="Initiation factor IF2/eIF5b, domain 3"/>
    <property type="match status" value="1"/>
</dbReference>
<dbReference type="SUPFAM" id="SSF52540">
    <property type="entry name" value="P-loop containing nucleoside triphosphate hydrolases"/>
    <property type="match status" value="1"/>
</dbReference>
<dbReference type="SUPFAM" id="SSF50447">
    <property type="entry name" value="Translation proteins"/>
    <property type="match status" value="2"/>
</dbReference>
<dbReference type="PROSITE" id="PS51722">
    <property type="entry name" value="G_TR_2"/>
    <property type="match status" value="1"/>
</dbReference>
<dbReference type="PROSITE" id="PS01176">
    <property type="entry name" value="IF2"/>
    <property type="match status" value="1"/>
</dbReference>